<reference key="1">
    <citation type="journal article" date="2007" name="Nat. Biotechnol.">
        <title>Genome sequencing and analysis of the versatile cell factory Aspergillus niger CBS 513.88.</title>
        <authorList>
            <person name="Pel H.J."/>
            <person name="de Winde J.H."/>
            <person name="Archer D.B."/>
            <person name="Dyer P.S."/>
            <person name="Hofmann G."/>
            <person name="Schaap P.J."/>
            <person name="Turner G."/>
            <person name="de Vries R.P."/>
            <person name="Albang R."/>
            <person name="Albermann K."/>
            <person name="Andersen M.R."/>
            <person name="Bendtsen J.D."/>
            <person name="Benen J.A.E."/>
            <person name="van den Berg M."/>
            <person name="Breestraat S."/>
            <person name="Caddick M.X."/>
            <person name="Contreras R."/>
            <person name="Cornell M."/>
            <person name="Coutinho P.M."/>
            <person name="Danchin E.G.J."/>
            <person name="Debets A.J.M."/>
            <person name="Dekker P."/>
            <person name="van Dijck P.W.M."/>
            <person name="van Dijk A."/>
            <person name="Dijkhuizen L."/>
            <person name="Driessen A.J.M."/>
            <person name="d'Enfert C."/>
            <person name="Geysens S."/>
            <person name="Goosen C."/>
            <person name="Groot G.S.P."/>
            <person name="de Groot P.W.J."/>
            <person name="Guillemette T."/>
            <person name="Henrissat B."/>
            <person name="Herweijer M."/>
            <person name="van den Hombergh J.P.T.W."/>
            <person name="van den Hondel C.A.M.J.J."/>
            <person name="van der Heijden R.T.J.M."/>
            <person name="van der Kaaij R.M."/>
            <person name="Klis F.M."/>
            <person name="Kools H.J."/>
            <person name="Kubicek C.P."/>
            <person name="van Kuyk P.A."/>
            <person name="Lauber J."/>
            <person name="Lu X."/>
            <person name="van der Maarel M.J.E.C."/>
            <person name="Meulenberg R."/>
            <person name="Menke H."/>
            <person name="Mortimer M.A."/>
            <person name="Nielsen J."/>
            <person name="Oliver S.G."/>
            <person name="Olsthoorn M."/>
            <person name="Pal K."/>
            <person name="van Peij N.N.M.E."/>
            <person name="Ram A.F.J."/>
            <person name="Rinas U."/>
            <person name="Roubos J.A."/>
            <person name="Sagt C.M.J."/>
            <person name="Schmoll M."/>
            <person name="Sun J."/>
            <person name="Ussery D."/>
            <person name="Varga J."/>
            <person name="Vervecken W."/>
            <person name="van de Vondervoort P.J.J."/>
            <person name="Wedler H."/>
            <person name="Woesten H.A.B."/>
            <person name="Zeng A.-P."/>
            <person name="van Ooyen A.J.J."/>
            <person name="Visser J."/>
            <person name="Stam H."/>
        </authorList>
    </citation>
    <scope>NUCLEOTIDE SEQUENCE [LARGE SCALE GENOMIC DNA]</scope>
    <source>
        <strain>ATCC MYA-4892 / CBS 513.88 / FGSC A1513</strain>
    </source>
</reference>
<evidence type="ECO:0000250" key="1">
    <source>
        <dbReference type="UniProtKB" id="P38244"/>
    </source>
</evidence>
<evidence type="ECO:0000250" key="2">
    <source>
        <dbReference type="UniProtKB" id="P80561"/>
    </source>
</evidence>
<evidence type="ECO:0000255" key="3"/>
<evidence type="ECO:0000255" key="4">
    <source>
        <dbReference type="PROSITE-ProRule" id="PRU00498"/>
    </source>
</evidence>
<evidence type="ECO:0000256" key="5">
    <source>
        <dbReference type="SAM" id="MobiDB-lite"/>
    </source>
</evidence>
<evidence type="ECO:0000305" key="6"/>
<organism>
    <name type="scientific">Aspergillus niger (strain ATCC MYA-4892 / CBS 513.88 / FGSC A1513)</name>
    <dbReference type="NCBI Taxonomy" id="425011"/>
    <lineage>
        <taxon>Eukaryota</taxon>
        <taxon>Fungi</taxon>
        <taxon>Dikarya</taxon>
        <taxon>Ascomycota</taxon>
        <taxon>Pezizomycotina</taxon>
        <taxon>Eurotiomycetes</taxon>
        <taxon>Eurotiomycetidae</taxon>
        <taxon>Eurotiales</taxon>
        <taxon>Aspergillaceae</taxon>
        <taxon>Aspergillus</taxon>
        <taxon>Aspergillus subgen. Circumdati</taxon>
    </lineage>
</organism>
<keyword id="KW-0325">Glycoprotein</keyword>
<keyword id="KW-0378">Hydrolase</keyword>
<keyword id="KW-0472">Membrane</keyword>
<keyword id="KW-0479">Metal-binding</keyword>
<keyword id="KW-0482">Metalloprotease</keyword>
<keyword id="KW-0645">Protease</keyword>
<keyword id="KW-1185">Reference proteome</keyword>
<keyword id="KW-0812">Transmembrane</keyword>
<keyword id="KW-1133">Transmembrane helix</keyword>
<keyword id="KW-0926">Vacuole</keyword>
<keyword id="KW-0862">Zinc</keyword>
<sequence>MAPLRLSRANPLAFARWPVTLITAVVYLAFLIPLLIVHHVVPSPPTANPNGLDLTQAWADLQVLTDGFHPYNSRRNDEVHTWLLQRIHEILDAAPPADQYLSVDEEKPKPAVFVFDDTQSNLSFVGNSLSSSNTAVYFEGTNILVYIRGSDDDHENWWEEPNGVPSGKGGVLVNAHYDSVSTGYGATDDGVGVVTCLQLIQYFMTPGHAPRRGLVVLLNNGEEDYLNGARVYGQHPISKFPHTFLNLEGAGAGGRAILFRSSDTEVTRPYMSSKYPFGSVLAADGFATGLIGSQTDYVVFEVDLGLRGLDVAFMEPRARYHTEQDDSRHTSKSSLWHMLSAAVATTEGLVSDKSDQFEGAPTDDAKVASGSGSKAVWFDLFGTTFVLFELHTLFALSVTLLVVAPLALLVTGIALTRADKMYLFRTSAKADESLDSVPLQGLRGFFRFPFLFAIPTAVTVGLAYLVTKVNPLIIHSSEYAVWSMMLSAWTFLAWFVSRMADFARPTALHRIYTLTWMFVLAWVLLVISTVYQNQRGLAGSYSVFFFFSGTFLATWISYLELFSLPRKSEYANQNRPTSRRASSYGGSRLGTASGEDHEEDDHDAEEEEEEQEPTESTSLLGGGQRTTFANYVRVAGDHRDSDTDHHYYPGVYKHEQRWSASLPTWTWTLQFLLMAPLVLIMVGPLALLLTSALHQTGQDGSSSLFIYVAIAALTTFLLTPLLPFIHRHTYHLPVFLLLVFLGTLIYNLVAFPFSPTNRLKLFFIQDIDLSTGSTTASLAGVQPYVHAAASTLPSTANQNITCTEHTTRGTKCAWPGLAPRVVPDTPYSDWLDFTISQQHNTTDDKEGDEDTHHPRKARITLSGRNTRACKLLFDSPISSFAVLGSSTDPRFPTSSPHGTKEIRLWSREWENEWVVDVAWTTSTNDDSEEGDEGEGKLNGKAVCLWSDNNSAGVIPALDEVRQFAPSWVAVSKAADGLVEGWKGFSI</sequence>
<protein>
    <recommendedName>
        <fullName evidence="1">Vacuolar membrane protease</fullName>
        <ecNumber evidence="6">3.4.-.-</ecNumber>
    </recommendedName>
    <alternativeName>
        <fullName evidence="1">FXNA-related family protease 1</fullName>
    </alternativeName>
</protein>
<name>PFF1_ASPNC</name>
<accession>A2RAN5</accession>
<proteinExistence type="inferred from homology"/>
<comment type="function">
    <text evidence="1">May be involved in vacuolar sorting and osmoregulation.</text>
</comment>
<comment type="cofactor">
    <cofactor evidence="2">
        <name>Zn(2+)</name>
        <dbReference type="ChEBI" id="CHEBI:29105"/>
    </cofactor>
    <text evidence="2">Binds 2 Zn(2+) ions per subunit.</text>
</comment>
<comment type="subcellular location">
    <subcellularLocation>
        <location evidence="1">Vacuole membrane</location>
        <topology evidence="3">Multi-pass membrane protein</topology>
    </subcellularLocation>
</comment>
<comment type="similarity">
    <text evidence="6">Belongs to the peptidase M28 family.</text>
</comment>
<feature type="chain" id="PRO_0000411702" description="Vacuolar membrane protease">
    <location>
        <begin position="1"/>
        <end position="986"/>
    </location>
</feature>
<feature type="topological domain" description="Cytoplasmic" evidence="1">
    <location>
        <begin position="1"/>
        <end position="16"/>
    </location>
</feature>
<feature type="transmembrane region" description="Helical; Name=1" evidence="3">
    <location>
        <begin position="17"/>
        <end position="37"/>
    </location>
</feature>
<feature type="topological domain" description="Vacuolar" evidence="1">
    <location>
        <begin position="38"/>
        <end position="392"/>
    </location>
</feature>
<feature type="transmembrane region" description="Helical; Name=2" evidence="3">
    <location>
        <begin position="393"/>
        <end position="413"/>
    </location>
</feature>
<feature type="topological domain" description="Cytoplasmic" evidence="1">
    <location>
        <begin position="414"/>
        <end position="444"/>
    </location>
</feature>
<feature type="transmembrane region" description="Helical; Name=3" evidence="3">
    <location>
        <begin position="445"/>
        <end position="465"/>
    </location>
</feature>
<feature type="topological domain" description="Vacuolar" evidence="1">
    <location>
        <begin position="466"/>
        <end position="475"/>
    </location>
</feature>
<feature type="transmembrane region" description="Helical; Name=4" evidence="3">
    <location>
        <begin position="476"/>
        <end position="496"/>
    </location>
</feature>
<feature type="topological domain" description="Cytoplasmic" evidence="1">
    <location>
        <begin position="497"/>
        <end position="510"/>
    </location>
</feature>
<feature type="transmembrane region" description="Helical; Name=5" evidence="3">
    <location>
        <begin position="511"/>
        <end position="531"/>
    </location>
</feature>
<feature type="topological domain" description="Vacuolar" evidence="1">
    <location>
        <begin position="532"/>
        <end position="535"/>
    </location>
</feature>
<feature type="transmembrane region" description="Helical; Name=6" evidence="3">
    <location>
        <begin position="536"/>
        <end position="556"/>
    </location>
</feature>
<feature type="topological domain" description="Cytoplasmic" evidence="1">
    <location>
        <begin position="557"/>
        <end position="668"/>
    </location>
</feature>
<feature type="transmembrane region" description="Helical; Name=7" evidence="3">
    <location>
        <begin position="669"/>
        <end position="689"/>
    </location>
</feature>
<feature type="topological domain" description="Vacuolar" evidence="1">
    <location>
        <begin position="690"/>
        <end position="704"/>
    </location>
</feature>
<feature type="transmembrane region" description="Helical; Name=8" evidence="3">
    <location>
        <begin position="705"/>
        <end position="725"/>
    </location>
</feature>
<feature type="topological domain" description="Cytoplasmic" evidence="1">
    <location>
        <begin position="726"/>
        <end position="732"/>
    </location>
</feature>
<feature type="transmembrane region" description="Helical; Name=9" evidence="3">
    <location>
        <begin position="733"/>
        <end position="753"/>
    </location>
</feature>
<feature type="topological domain" description="Vacuolar" evidence="1">
    <location>
        <begin position="754"/>
        <end position="986"/>
    </location>
</feature>
<feature type="region of interest" description="Disordered" evidence="5">
    <location>
        <begin position="573"/>
        <end position="622"/>
    </location>
</feature>
<feature type="region of interest" description="Disordered" evidence="5">
    <location>
        <begin position="840"/>
        <end position="859"/>
    </location>
</feature>
<feature type="compositionally biased region" description="Polar residues" evidence="5">
    <location>
        <begin position="573"/>
        <end position="585"/>
    </location>
</feature>
<feature type="compositionally biased region" description="Acidic residues" evidence="5">
    <location>
        <begin position="596"/>
        <end position="613"/>
    </location>
</feature>
<feature type="active site" description="Proton acceptor" evidence="2">
    <location>
        <position position="222"/>
    </location>
</feature>
<feature type="binding site" evidence="2">
    <location>
        <position position="176"/>
    </location>
    <ligand>
        <name>Zn(2+)</name>
        <dbReference type="ChEBI" id="CHEBI:29105"/>
        <label>1</label>
        <note>catalytic</note>
    </ligand>
</feature>
<feature type="binding site" evidence="2">
    <location>
        <position position="188"/>
    </location>
    <ligand>
        <name>Zn(2+)</name>
        <dbReference type="ChEBI" id="CHEBI:29105"/>
        <label>1</label>
        <note>catalytic</note>
    </ligand>
</feature>
<feature type="binding site" evidence="2">
    <location>
        <position position="188"/>
    </location>
    <ligand>
        <name>Zn(2+)</name>
        <dbReference type="ChEBI" id="CHEBI:29105"/>
        <label>2</label>
        <note>catalytic</note>
    </ligand>
</feature>
<feature type="binding site" evidence="2">
    <location>
        <position position="223"/>
    </location>
    <ligand>
        <name>Zn(2+)</name>
        <dbReference type="ChEBI" id="CHEBI:29105"/>
        <label>2</label>
        <note>catalytic</note>
    </ligand>
</feature>
<feature type="binding site" evidence="2">
    <location>
        <position position="248"/>
    </location>
    <ligand>
        <name>Zn(2+)</name>
        <dbReference type="ChEBI" id="CHEBI:29105"/>
        <label>1</label>
        <note>catalytic</note>
    </ligand>
</feature>
<feature type="binding site" evidence="2">
    <location>
        <position position="321"/>
    </location>
    <ligand>
        <name>Zn(2+)</name>
        <dbReference type="ChEBI" id="CHEBI:29105"/>
        <label>2</label>
        <note>catalytic</note>
    </ligand>
</feature>
<feature type="site" description="Transition state stabilizer" evidence="2">
    <location>
        <position position="320"/>
    </location>
</feature>
<feature type="glycosylation site" description="N-linked (GlcNAc...) asparagine" evidence="4">
    <location>
        <position position="121"/>
    </location>
</feature>
<feature type="glycosylation site" description="N-linked (GlcNAc...) asparagine" evidence="4">
    <location>
        <position position="799"/>
    </location>
</feature>
<feature type="glycosylation site" description="N-linked (GlcNAc...) asparagine" evidence="4">
    <location>
        <position position="840"/>
    </location>
</feature>
<feature type="glycosylation site" description="N-linked (GlcNAc...) asparagine" evidence="4">
    <location>
        <position position="948"/>
    </location>
</feature>
<dbReference type="EC" id="3.4.-.-" evidence="6"/>
<dbReference type="EMBL" id="AM270404">
    <property type="protein sequence ID" value="CAK97416.1"/>
    <property type="molecule type" value="Genomic_DNA"/>
</dbReference>
<dbReference type="RefSeq" id="XP_001398837.1">
    <property type="nucleotide sequence ID" value="XM_001398800.2"/>
</dbReference>
<dbReference type="SMR" id="A2RAN5"/>
<dbReference type="EnsemblFungi" id="CAK97416">
    <property type="protein sequence ID" value="CAK97416"/>
    <property type="gene ID" value="An18g03780"/>
</dbReference>
<dbReference type="GeneID" id="4989942"/>
<dbReference type="KEGG" id="ang:An18g03780"/>
<dbReference type="VEuPathDB" id="FungiDB:An18g03780"/>
<dbReference type="HOGENOM" id="CLU_006412_1_0_1"/>
<dbReference type="Proteomes" id="UP000006706">
    <property type="component" value="Chromosome 8L"/>
</dbReference>
<dbReference type="GO" id="GO:0005774">
    <property type="term" value="C:vacuolar membrane"/>
    <property type="evidence" value="ECO:0007669"/>
    <property type="project" value="UniProtKB-SubCell"/>
</dbReference>
<dbReference type="GO" id="GO:0046872">
    <property type="term" value="F:metal ion binding"/>
    <property type="evidence" value="ECO:0007669"/>
    <property type="project" value="UniProtKB-KW"/>
</dbReference>
<dbReference type="GO" id="GO:0008235">
    <property type="term" value="F:metalloexopeptidase activity"/>
    <property type="evidence" value="ECO:0007669"/>
    <property type="project" value="InterPro"/>
</dbReference>
<dbReference type="GO" id="GO:0006508">
    <property type="term" value="P:proteolysis"/>
    <property type="evidence" value="ECO:0007669"/>
    <property type="project" value="UniProtKB-KW"/>
</dbReference>
<dbReference type="CDD" id="cd03875">
    <property type="entry name" value="M28_Fxna_like"/>
    <property type="match status" value="1"/>
</dbReference>
<dbReference type="FunFam" id="3.40.630.10:FF:000057">
    <property type="entry name" value="Vacuolar membrane protease"/>
    <property type="match status" value="1"/>
</dbReference>
<dbReference type="Gene3D" id="3.40.630.10">
    <property type="entry name" value="Zn peptidases"/>
    <property type="match status" value="1"/>
</dbReference>
<dbReference type="InterPro" id="IPR048024">
    <property type="entry name" value="Fxna-like_M28_dom"/>
</dbReference>
<dbReference type="InterPro" id="IPR045175">
    <property type="entry name" value="M28_fam"/>
</dbReference>
<dbReference type="InterPro" id="IPR007484">
    <property type="entry name" value="Peptidase_M28"/>
</dbReference>
<dbReference type="InterPro" id="IPR053975">
    <property type="entry name" value="PFF1_C"/>
</dbReference>
<dbReference type="InterPro" id="IPR053976">
    <property type="entry name" value="PFF1_TM"/>
</dbReference>
<dbReference type="PANTHER" id="PTHR12147">
    <property type="entry name" value="METALLOPEPTIDASE M28 FAMILY MEMBER"/>
    <property type="match status" value="1"/>
</dbReference>
<dbReference type="PANTHER" id="PTHR12147:SF58">
    <property type="entry name" value="VACUOLAR MEMBRANE PROTEASE"/>
    <property type="match status" value="1"/>
</dbReference>
<dbReference type="Pfam" id="PF04389">
    <property type="entry name" value="Peptidase_M28"/>
    <property type="match status" value="1"/>
</dbReference>
<dbReference type="Pfam" id="PF22250">
    <property type="entry name" value="PFF1_C"/>
    <property type="match status" value="1"/>
</dbReference>
<dbReference type="Pfam" id="PF22251">
    <property type="entry name" value="PFF1_TM"/>
    <property type="match status" value="1"/>
</dbReference>
<dbReference type="SUPFAM" id="SSF53187">
    <property type="entry name" value="Zn-dependent exopeptidases"/>
    <property type="match status" value="1"/>
</dbReference>
<gene>
    <name type="ORF">An18g03780</name>
</gene>